<keyword id="KW-0204">Cytolysis</keyword>
<keyword id="KW-1061">Dermonecrotic toxin</keyword>
<keyword id="KW-1015">Disulfide bond</keyword>
<keyword id="KW-0354">Hemolysis</keyword>
<keyword id="KW-0442">Lipid degradation</keyword>
<keyword id="KW-0443">Lipid metabolism</keyword>
<keyword id="KW-0456">Lyase</keyword>
<keyword id="KW-0460">Magnesium</keyword>
<keyword id="KW-0479">Metal-binding</keyword>
<keyword id="KW-0964">Secreted</keyword>
<keyword id="KW-0800">Toxin</keyword>
<comment type="function">
    <text evidence="1 3">Dermonecrotic toxins cleave the phosphodiester linkage between the phosphate and headgroup of certain phospholipids (sphingolipid and lysolipid substrates), forming an alcohol (often choline) and a cyclic phosphate (By similarity). This toxin acts on sphingomyelin (SM) (By similarity). It may also act on ceramide phosphoethanolamine (CPE), lysophosphatidylcholine (LPC) and lysophosphatidylethanolamine (LPE), but not on lysophosphatidylserine (LPS), and lysophosphatidylglycerol (LPG) (By similarity). It acts by transphosphatidylation, releasing exclusively cyclic phosphate products as second products (By similarity). Induces dermonecrosis, hemolysis, increased vascular permeability, edema, inflammatory response, and platelet aggregation (By similarity).</text>
</comment>
<comment type="catalytic activity">
    <reaction evidence="1">
        <text>an N-(acyl)-sphingosylphosphocholine = an N-(acyl)-sphingosyl-1,3-cyclic phosphate + choline</text>
        <dbReference type="Rhea" id="RHEA:60652"/>
        <dbReference type="ChEBI" id="CHEBI:15354"/>
        <dbReference type="ChEBI" id="CHEBI:64583"/>
        <dbReference type="ChEBI" id="CHEBI:143892"/>
    </reaction>
</comment>
<comment type="catalytic activity">
    <reaction evidence="1">
        <text>an N-(acyl)-sphingosylphosphoethanolamine = an N-(acyl)-sphingosyl-1,3-cyclic phosphate + ethanolamine</text>
        <dbReference type="Rhea" id="RHEA:60648"/>
        <dbReference type="ChEBI" id="CHEBI:57603"/>
        <dbReference type="ChEBI" id="CHEBI:143891"/>
        <dbReference type="ChEBI" id="CHEBI:143892"/>
    </reaction>
</comment>
<comment type="catalytic activity">
    <reaction evidence="1">
        <text>a 1-acyl-sn-glycero-3-phosphocholine = a 1-acyl-sn-glycero-2,3-cyclic phosphate + choline</text>
        <dbReference type="Rhea" id="RHEA:60700"/>
        <dbReference type="ChEBI" id="CHEBI:15354"/>
        <dbReference type="ChEBI" id="CHEBI:58168"/>
        <dbReference type="ChEBI" id="CHEBI:143947"/>
    </reaction>
</comment>
<comment type="catalytic activity">
    <reaction evidence="1">
        <text>a 1-acyl-sn-glycero-3-phosphoethanolamine = a 1-acyl-sn-glycero-2,3-cyclic phosphate + ethanolamine</text>
        <dbReference type="Rhea" id="RHEA:60704"/>
        <dbReference type="ChEBI" id="CHEBI:57603"/>
        <dbReference type="ChEBI" id="CHEBI:64381"/>
        <dbReference type="ChEBI" id="CHEBI:143947"/>
    </reaction>
</comment>
<comment type="cofactor">
    <cofactor evidence="5">
        <name>Mg(2+)</name>
        <dbReference type="ChEBI" id="CHEBI:18420"/>
    </cofactor>
    <text evidence="5">Binds 1 Mg(2+) ion per subunit.</text>
</comment>
<comment type="subcellular location">
    <subcellularLocation>
        <location evidence="8">Secreted</location>
    </subcellularLocation>
</comment>
<comment type="tissue specificity">
    <text evidence="8">Expressed by the venom gland.</text>
</comment>
<comment type="similarity">
    <text evidence="7">Belongs to the arthropod phospholipase D family. Class II subfamily.</text>
</comment>
<comment type="caution">
    <text evidence="1 2 4">The most common activity assay for dermonecrotic toxins detects enzymatic activity by monitoring choline release from substrate. Liberation of choline from sphingomyelin (SM) or lysophosphatidylcholine (LPC) is commonly assumed to result from substrate hydrolysis, giving either ceramide-1-phosphate (C1P) or lysophosphatidic acid (LPA), respectively, as a second product. However, two studies from Lajoie and colleagues (2013 and 2015) report the observation of exclusive formation of cyclic phosphate products as second products, resulting from intramolecular transphosphatidylation. Cyclic phosphates have vastly different biological properties from their monoester counterparts, and they may be relevant to the pathology of brown spider envenomation.</text>
</comment>
<sequence length="275" mass="31592">WIMGHMVNEIYQIDEFVDLGANSIETDITFDDDAMAEYSYHGVPCDCMRWCHKWEYVNDFLEGLRRATTPGDSKYRKQLILVVFDLKTGDLSSSTAYKGGKLFAEKLLRYYWNGGSNGGRAYIIISIPDIDHYAFISGFRDALKKSGHEDLLAKVGYDFSGNDDLNSIRGALHKAGVKDREHVWQSDGITNCLLRSLDRVNEAVKNRDSSNGYISKMYYWTIEKYATVRDALNAEVDGIMTNYPDVIVNVLNEDSFKNRFRMATFDDNPWELFKR</sequence>
<feature type="chain" id="PRO_0000392832" description="Dermonecrotic toxin LamSicTox-alphaIV1ii">
    <location>
        <begin position="1" status="less than"/>
        <end position="275"/>
    </location>
</feature>
<feature type="active site" evidence="5">
    <location>
        <position position="5"/>
    </location>
</feature>
<feature type="active site" description="Nucleophile" evidence="5">
    <location>
        <position position="41"/>
    </location>
</feature>
<feature type="binding site" evidence="5">
    <location>
        <position position="25"/>
    </location>
    <ligand>
        <name>Mg(2+)</name>
        <dbReference type="ChEBI" id="CHEBI:18420"/>
    </ligand>
</feature>
<feature type="binding site" evidence="5">
    <location>
        <position position="27"/>
    </location>
    <ligand>
        <name>Mg(2+)</name>
        <dbReference type="ChEBI" id="CHEBI:18420"/>
    </ligand>
</feature>
<feature type="binding site" evidence="5">
    <location>
        <position position="85"/>
    </location>
    <ligand>
        <name>Mg(2+)</name>
        <dbReference type="ChEBI" id="CHEBI:18420"/>
    </ligand>
</feature>
<feature type="disulfide bond" evidence="3">
    <location>
        <begin position="45"/>
        <end position="51"/>
    </location>
</feature>
<feature type="disulfide bond" evidence="3">
    <location>
        <begin position="47"/>
        <end position="192"/>
    </location>
</feature>
<feature type="non-terminal residue">
    <location>
        <position position="1"/>
    </location>
</feature>
<organism>
    <name type="scientific">Loxosceles amazonica</name>
    <name type="common">Recluse spider</name>
    <dbReference type="NCBI Taxonomy" id="571517"/>
    <lineage>
        <taxon>Eukaryota</taxon>
        <taxon>Metazoa</taxon>
        <taxon>Ecdysozoa</taxon>
        <taxon>Arthropoda</taxon>
        <taxon>Chelicerata</taxon>
        <taxon>Arachnida</taxon>
        <taxon>Araneae</taxon>
        <taxon>Araneomorphae</taxon>
        <taxon>Haplogynae</taxon>
        <taxon>Scytodoidea</taxon>
        <taxon>Sicariidae</taxon>
        <taxon>Loxosceles</taxon>
    </lineage>
</organism>
<accession>C0JB19</accession>
<evidence type="ECO:0000250" key="1">
    <source>
        <dbReference type="UniProtKB" id="A0A0D4WTV1"/>
    </source>
</evidence>
<evidence type="ECO:0000250" key="2">
    <source>
        <dbReference type="UniProtKB" id="A0A0D4WV12"/>
    </source>
</evidence>
<evidence type="ECO:0000250" key="3">
    <source>
        <dbReference type="UniProtKB" id="P0CE80"/>
    </source>
</evidence>
<evidence type="ECO:0000250" key="4">
    <source>
        <dbReference type="UniProtKB" id="Q4ZFU2"/>
    </source>
</evidence>
<evidence type="ECO:0000250" key="5">
    <source>
        <dbReference type="UniProtKB" id="Q8I914"/>
    </source>
</evidence>
<evidence type="ECO:0000303" key="6">
    <source>
    </source>
</evidence>
<evidence type="ECO:0000305" key="7"/>
<evidence type="ECO:0000305" key="8">
    <source>
    </source>
</evidence>
<reference key="1">
    <citation type="journal article" date="2009" name="Mol. Biol. Evol.">
        <title>Molecular evolution, functional variation, and proposed nomenclature of the gene family that includes sphingomyelinase D in sicariid spider venoms.</title>
        <authorList>
            <person name="Binford G.J."/>
            <person name="Bodner M.R."/>
            <person name="Cordes M.H."/>
            <person name="Baldwin K.L."/>
            <person name="Rynerson M.R."/>
            <person name="Burns S.N."/>
            <person name="Zobel-Thropp P.A."/>
        </authorList>
    </citation>
    <scope>NUCLEOTIDE SEQUENCE [MRNA]</scope>
    <scope>NOMENCLATURE</scope>
    <source>
        <tissue>Venom gland</tissue>
    </source>
</reference>
<dbReference type="EC" id="4.6.1.-" evidence="4"/>
<dbReference type="EMBL" id="FJ171454">
    <property type="protein sequence ID" value="ACN48950.1"/>
    <property type="molecule type" value="mRNA"/>
</dbReference>
<dbReference type="SMR" id="C0JB19"/>
<dbReference type="GO" id="GO:0005576">
    <property type="term" value="C:extracellular region"/>
    <property type="evidence" value="ECO:0007669"/>
    <property type="project" value="UniProtKB-SubCell"/>
</dbReference>
<dbReference type="GO" id="GO:0016829">
    <property type="term" value="F:lyase activity"/>
    <property type="evidence" value="ECO:0007669"/>
    <property type="project" value="UniProtKB-KW"/>
</dbReference>
<dbReference type="GO" id="GO:0046872">
    <property type="term" value="F:metal ion binding"/>
    <property type="evidence" value="ECO:0007669"/>
    <property type="project" value="UniProtKB-KW"/>
</dbReference>
<dbReference type="GO" id="GO:0008081">
    <property type="term" value="F:phosphoric diester hydrolase activity"/>
    <property type="evidence" value="ECO:0007669"/>
    <property type="project" value="InterPro"/>
</dbReference>
<dbReference type="GO" id="GO:0090729">
    <property type="term" value="F:toxin activity"/>
    <property type="evidence" value="ECO:0007669"/>
    <property type="project" value="UniProtKB-KW"/>
</dbReference>
<dbReference type="GO" id="GO:0031640">
    <property type="term" value="P:killing of cells of another organism"/>
    <property type="evidence" value="ECO:0007669"/>
    <property type="project" value="UniProtKB-KW"/>
</dbReference>
<dbReference type="GO" id="GO:0016042">
    <property type="term" value="P:lipid catabolic process"/>
    <property type="evidence" value="ECO:0007669"/>
    <property type="project" value="UniProtKB-KW"/>
</dbReference>
<dbReference type="CDD" id="cd08576">
    <property type="entry name" value="GDPD_like_SMaseD_PLD"/>
    <property type="match status" value="1"/>
</dbReference>
<dbReference type="Gene3D" id="3.20.20.190">
    <property type="entry name" value="Phosphatidylinositol (PI) phosphodiesterase"/>
    <property type="match status" value="1"/>
</dbReference>
<dbReference type="InterPro" id="IPR017946">
    <property type="entry name" value="PLC-like_Pdiesterase_TIM-brl"/>
</dbReference>
<dbReference type="SUPFAM" id="SSF51695">
    <property type="entry name" value="PLC-like phosphodiesterases"/>
    <property type="match status" value="1"/>
</dbReference>
<protein>
    <recommendedName>
        <fullName evidence="6">Dermonecrotic toxin LamSicTox-alphaIV1ii</fullName>
        <ecNumber evidence="4">4.6.1.-</ecNumber>
    </recommendedName>
    <alternativeName>
        <fullName>Phospholipase D</fullName>
        <shortName>PLD</shortName>
    </alternativeName>
    <alternativeName>
        <fullName>Sphingomyelin phosphodiesterase D</fullName>
        <shortName>SMD</shortName>
        <shortName>SMase D</shortName>
        <shortName>Sphingomyelinase D</shortName>
    </alternativeName>
</protein>
<proteinExistence type="evidence at transcript level"/>
<name>A412_LOXAM</name>